<proteinExistence type="inferred from homology"/>
<keyword id="KW-0249">Electron transport</keyword>
<keyword id="KW-0472">Membrane</keyword>
<keyword id="KW-0496">Mitochondrion</keyword>
<keyword id="KW-0999">Mitochondrion inner membrane</keyword>
<keyword id="KW-0520">NAD</keyword>
<keyword id="KW-0679">Respiratory chain</keyword>
<keyword id="KW-1278">Translocase</keyword>
<keyword id="KW-0812">Transmembrane</keyword>
<keyword id="KW-1133">Transmembrane helix</keyword>
<keyword id="KW-0813">Transport</keyword>
<keyword id="KW-0830">Ubiquinone</keyword>
<dbReference type="EC" id="7.1.1.2"/>
<dbReference type="EMBL" id="AF224644">
    <property type="protein sequence ID" value="AAP33662.1"/>
    <property type="molecule type" value="Genomic_DNA"/>
</dbReference>
<dbReference type="SMR" id="Q85DA0"/>
<dbReference type="GO" id="GO:0005743">
    <property type="term" value="C:mitochondrial inner membrane"/>
    <property type="evidence" value="ECO:0000250"/>
    <property type="project" value="UniProtKB"/>
</dbReference>
<dbReference type="GO" id="GO:0045271">
    <property type="term" value="C:respiratory chain complex I"/>
    <property type="evidence" value="ECO:0000250"/>
    <property type="project" value="UniProtKB"/>
</dbReference>
<dbReference type="GO" id="GO:0008137">
    <property type="term" value="F:NADH dehydrogenase (ubiquinone) activity"/>
    <property type="evidence" value="ECO:0000250"/>
    <property type="project" value="UniProtKB"/>
</dbReference>
<dbReference type="GO" id="GO:0042773">
    <property type="term" value="P:ATP synthesis coupled electron transport"/>
    <property type="evidence" value="ECO:0007669"/>
    <property type="project" value="InterPro"/>
</dbReference>
<dbReference type="FunFam" id="1.10.287.3510:FF:000002">
    <property type="entry name" value="NADH-ubiquinone oxidoreductase chain 4L"/>
    <property type="match status" value="1"/>
</dbReference>
<dbReference type="Gene3D" id="1.10.287.3510">
    <property type="match status" value="1"/>
</dbReference>
<dbReference type="InterPro" id="IPR001133">
    <property type="entry name" value="NADH_UbQ_OxRdtase_chain4L/K"/>
</dbReference>
<dbReference type="InterPro" id="IPR039428">
    <property type="entry name" value="NUOK/Mnh_C1-like"/>
</dbReference>
<dbReference type="PANTHER" id="PTHR11434:SF0">
    <property type="entry name" value="NADH-UBIQUINONE OXIDOREDUCTASE CHAIN 4L"/>
    <property type="match status" value="1"/>
</dbReference>
<dbReference type="PANTHER" id="PTHR11434">
    <property type="entry name" value="NADH-UBIQUINONE OXIDOREDUCTASE SUBUNIT ND4L"/>
    <property type="match status" value="1"/>
</dbReference>
<dbReference type="Pfam" id="PF00420">
    <property type="entry name" value="Oxidored_q2"/>
    <property type="match status" value="1"/>
</dbReference>
<evidence type="ECO:0000250" key="1">
    <source>
        <dbReference type="UniProtKB" id="P03901"/>
    </source>
</evidence>
<evidence type="ECO:0000250" key="2">
    <source>
        <dbReference type="UniProtKB" id="P03902"/>
    </source>
</evidence>
<evidence type="ECO:0000255" key="3"/>
<evidence type="ECO:0000305" key="4"/>
<feature type="chain" id="PRO_0000275022" description="NADH-ubiquinone oxidoreductase chain 4L">
    <location>
        <begin position="1"/>
        <end position="98"/>
    </location>
</feature>
<feature type="transmembrane region" description="Helical" evidence="3">
    <location>
        <begin position="1"/>
        <end position="21"/>
    </location>
</feature>
<feature type="transmembrane region" description="Helical" evidence="3">
    <location>
        <begin position="26"/>
        <end position="46"/>
    </location>
</feature>
<feature type="transmembrane region" description="Helical" evidence="3">
    <location>
        <begin position="61"/>
        <end position="81"/>
    </location>
</feature>
<reference key="1">
    <citation type="journal article" date="2003" name="Proc. Natl. Acad. Sci. U.S.A.">
        <title>A molecular approach to comparative phylogeography of extant Malagasy lemurs.</title>
        <authorList>
            <person name="Pastorini J."/>
            <person name="Thalmann U."/>
            <person name="Martin R.D."/>
        </authorList>
    </citation>
    <scope>NUCLEOTIDE SEQUENCE [GENOMIC DNA]</scope>
</reference>
<name>NU4LM_GALSE</name>
<geneLocation type="mitochondrion"/>
<gene>
    <name type="primary">MT-ND4L</name>
    <name type="synonym">MTND4L</name>
    <name type="synonym">NADH4L</name>
    <name type="synonym">ND4L</name>
</gene>
<sequence length="98" mass="10627">MPSISTNIILAFTTALLGVLIYRSHLMSSLLCLEGMMLSMFILVSLTTLNLHFSLATVTPIILLVFAACEAAVGLALLVMVSNTYGMDYIQNLNLLQC</sequence>
<accession>Q85DA0</accession>
<comment type="function">
    <text evidence="1">Core subunit of the mitochondrial membrane respiratory chain NADH dehydrogenase (Complex I) which catalyzes electron transfer from NADH through the respiratory chain, using ubiquinone as an electron acceptor. Part of the enzyme membrane arm which is embedded in the lipid bilayer and involved in proton translocation.</text>
</comment>
<comment type="catalytic activity">
    <reaction evidence="1">
        <text>a ubiquinone + NADH + 5 H(+)(in) = a ubiquinol + NAD(+) + 4 H(+)(out)</text>
        <dbReference type="Rhea" id="RHEA:29091"/>
        <dbReference type="Rhea" id="RHEA-COMP:9565"/>
        <dbReference type="Rhea" id="RHEA-COMP:9566"/>
        <dbReference type="ChEBI" id="CHEBI:15378"/>
        <dbReference type="ChEBI" id="CHEBI:16389"/>
        <dbReference type="ChEBI" id="CHEBI:17976"/>
        <dbReference type="ChEBI" id="CHEBI:57540"/>
        <dbReference type="ChEBI" id="CHEBI:57945"/>
        <dbReference type="EC" id="7.1.1.2"/>
    </reaction>
    <physiologicalReaction direction="left-to-right" evidence="1">
        <dbReference type="Rhea" id="RHEA:29092"/>
    </physiologicalReaction>
</comment>
<comment type="subunit">
    <text evidence="2">Core subunit of respiratory chain NADH dehydrogenase (Complex I) which is composed of 45 different subunits.</text>
</comment>
<comment type="subcellular location">
    <subcellularLocation>
        <location evidence="2">Mitochondrion inner membrane</location>
        <topology evidence="3">Multi-pass membrane protein</topology>
    </subcellularLocation>
</comment>
<comment type="similarity">
    <text evidence="4">Belongs to the complex I subunit 4L family.</text>
</comment>
<organism>
    <name type="scientific">Galago senegalensis</name>
    <name type="common">Northern lesser bushbaby</name>
    <name type="synonym">Senegal bushbaby</name>
    <dbReference type="NCBI Taxonomy" id="9465"/>
    <lineage>
        <taxon>Eukaryota</taxon>
        <taxon>Metazoa</taxon>
        <taxon>Chordata</taxon>
        <taxon>Craniata</taxon>
        <taxon>Vertebrata</taxon>
        <taxon>Euteleostomi</taxon>
        <taxon>Mammalia</taxon>
        <taxon>Eutheria</taxon>
        <taxon>Euarchontoglires</taxon>
        <taxon>Primates</taxon>
        <taxon>Strepsirrhini</taxon>
        <taxon>Lorisiformes</taxon>
        <taxon>Galagidae</taxon>
        <taxon>Galago</taxon>
    </lineage>
</organism>
<protein>
    <recommendedName>
        <fullName>NADH-ubiquinone oxidoreductase chain 4L</fullName>
        <ecNumber>7.1.1.2</ecNumber>
    </recommendedName>
    <alternativeName>
        <fullName>NADH dehydrogenase subunit 4L</fullName>
    </alternativeName>
</protein>